<name>AROD_GEOSW</name>
<protein>
    <recommendedName>
        <fullName evidence="1">3-dehydroquinate dehydratase</fullName>
        <shortName evidence="1">3-dehydroquinase</shortName>
        <ecNumber evidence="1">4.2.1.10</ecNumber>
    </recommendedName>
    <alternativeName>
        <fullName evidence="1">Type I DHQase</fullName>
    </alternativeName>
    <alternativeName>
        <fullName evidence="1">Type I dehydroquinase</fullName>
        <shortName evidence="1">DHQ1</shortName>
    </alternativeName>
</protein>
<evidence type="ECO:0000255" key="1">
    <source>
        <dbReference type="HAMAP-Rule" id="MF_00214"/>
    </source>
</evidence>
<feature type="chain" id="PRO_1000204211" description="3-dehydroquinate dehydratase">
    <location>
        <begin position="1"/>
        <end position="259"/>
    </location>
</feature>
<feature type="active site" description="Proton donor/acceptor" evidence="1">
    <location>
        <position position="147"/>
    </location>
</feature>
<feature type="active site" description="Schiff-base intermediate with substrate" evidence="1">
    <location>
        <position position="174"/>
    </location>
</feature>
<feature type="binding site" evidence="1">
    <location>
        <begin position="50"/>
        <end position="52"/>
    </location>
    <ligand>
        <name>3-dehydroquinate</name>
        <dbReference type="ChEBI" id="CHEBI:32364"/>
    </ligand>
</feature>
<feature type="binding site" evidence="1">
    <location>
        <position position="86"/>
    </location>
    <ligand>
        <name>3-dehydroquinate</name>
        <dbReference type="ChEBI" id="CHEBI:32364"/>
    </ligand>
</feature>
<feature type="binding site" evidence="1">
    <location>
        <position position="216"/>
    </location>
    <ligand>
        <name>3-dehydroquinate</name>
        <dbReference type="ChEBI" id="CHEBI:32364"/>
    </ligand>
</feature>
<feature type="binding site" evidence="1">
    <location>
        <position position="235"/>
    </location>
    <ligand>
        <name>3-dehydroquinate</name>
        <dbReference type="ChEBI" id="CHEBI:32364"/>
    </ligand>
</feature>
<feature type="binding site" evidence="1">
    <location>
        <position position="239"/>
    </location>
    <ligand>
        <name>3-dehydroquinate</name>
        <dbReference type="ChEBI" id="CHEBI:32364"/>
    </ligand>
</feature>
<proteinExistence type="inferred from homology"/>
<organism>
    <name type="scientific">Geobacillus sp. (strain WCH70)</name>
    <dbReference type="NCBI Taxonomy" id="471223"/>
    <lineage>
        <taxon>Bacteria</taxon>
        <taxon>Bacillati</taxon>
        <taxon>Bacillota</taxon>
        <taxon>Bacilli</taxon>
        <taxon>Bacillales</taxon>
        <taxon>Anoxybacillaceae</taxon>
        <taxon>Geobacillus</taxon>
    </lineage>
</organism>
<accession>C5D2V7</accession>
<dbReference type="EC" id="4.2.1.10" evidence="1"/>
<dbReference type="EMBL" id="CP001638">
    <property type="protein sequence ID" value="ACS24749.1"/>
    <property type="molecule type" value="Genomic_DNA"/>
</dbReference>
<dbReference type="SMR" id="C5D2V7"/>
<dbReference type="STRING" id="471223.GWCH70_2023"/>
<dbReference type="KEGG" id="gwc:GWCH70_2023"/>
<dbReference type="eggNOG" id="COG0710">
    <property type="taxonomic scope" value="Bacteria"/>
</dbReference>
<dbReference type="HOGENOM" id="CLU_064444_0_0_9"/>
<dbReference type="OrthoDB" id="9813659at2"/>
<dbReference type="UniPathway" id="UPA00053">
    <property type="reaction ID" value="UER00086"/>
</dbReference>
<dbReference type="GO" id="GO:0003855">
    <property type="term" value="F:3-dehydroquinate dehydratase activity"/>
    <property type="evidence" value="ECO:0007669"/>
    <property type="project" value="UniProtKB-UniRule"/>
</dbReference>
<dbReference type="GO" id="GO:0046279">
    <property type="term" value="P:3,4-dihydroxybenzoate biosynthetic process"/>
    <property type="evidence" value="ECO:0007669"/>
    <property type="project" value="TreeGrafter"/>
</dbReference>
<dbReference type="GO" id="GO:0008652">
    <property type="term" value="P:amino acid biosynthetic process"/>
    <property type="evidence" value="ECO:0007669"/>
    <property type="project" value="UniProtKB-KW"/>
</dbReference>
<dbReference type="GO" id="GO:0009073">
    <property type="term" value="P:aromatic amino acid family biosynthetic process"/>
    <property type="evidence" value="ECO:0007669"/>
    <property type="project" value="UniProtKB-KW"/>
</dbReference>
<dbReference type="GO" id="GO:0009423">
    <property type="term" value="P:chorismate biosynthetic process"/>
    <property type="evidence" value="ECO:0007669"/>
    <property type="project" value="UniProtKB-UniRule"/>
</dbReference>
<dbReference type="CDD" id="cd00502">
    <property type="entry name" value="DHQase_I"/>
    <property type="match status" value="1"/>
</dbReference>
<dbReference type="FunFam" id="3.20.20.70:FF:000047">
    <property type="entry name" value="3-dehydroquinate dehydratase"/>
    <property type="match status" value="1"/>
</dbReference>
<dbReference type="Gene3D" id="3.20.20.70">
    <property type="entry name" value="Aldolase class I"/>
    <property type="match status" value="1"/>
</dbReference>
<dbReference type="HAMAP" id="MF_00214">
    <property type="entry name" value="AroD"/>
    <property type="match status" value="1"/>
</dbReference>
<dbReference type="InterPro" id="IPR013785">
    <property type="entry name" value="Aldolase_TIM"/>
</dbReference>
<dbReference type="InterPro" id="IPR001381">
    <property type="entry name" value="DHquinase_I"/>
</dbReference>
<dbReference type="InterPro" id="IPR050146">
    <property type="entry name" value="Type-I_3-dehydroquinase"/>
</dbReference>
<dbReference type="NCBIfam" id="TIGR01093">
    <property type="entry name" value="aroD"/>
    <property type="match status" value="1"/>
</dbReference>
<dbReference type="PANTHER" id="PTHR43699">
    <property type="entry name" value="3-DEHYDROQUINATE DEHYDRATASE"/>
    <property type="match status" value="1"/>
</dbReference>
<dbReference type="PANTHER" id="PTHR43699:SF1">
    <property type="entry name" value="3-DEHYDROQUINATE DEHYDRATASE"/>
    <property type="match status" value="1"/>
</dbReference>
<dbReference type="Pfam" id="PF01487">
    <property type="entry name" value="DHquinase_I"/>
    <property type="match status" value="1"/>
</dbReference>
<dbReference type="SUPFAM" id="SSF51569">
    <property type="entry name" value="Aldolase"/>
    <property type="match status" value="1"/>
</dbReference>
<reference key="1">
    <citation type="submission" date="2009-06" db="EMBL/GenBank/DDBJ databases">
        <title>Complete sequence of chromosome of Geopacillus sp. WCH70.</title>
        <authorList>
            <consortium name="US DOE Joint Genome Institute"/>
            <person name="Lucas S."/>
            <person name="Copeland A."/>
            <person name="Lapidus A."/>
            <person name="Glavina del Rio T."/>
            <person name="Dalin E."/>
            <person name="Tice H."/>
            <person name="Bruce D."/>
            <person name="Goodwin L."/>
            <person name="Pitluck S."/>
            <person name="Chertkov O."/>
            <person name="Brettin T."/>
            <person name="Detter J.C."/>
            <person name="Han C."/>
            <person name="Larimer F."/>
            <person name="Land M."/>
            <person name="Hauser L."/>
            <person name="Kyrpides N."/>
            <person name="Mikhailova N."/>
            <person name="Brumm P."/>
            <person name="Mead D.A."/>
            <person name="Richardson P."/>
        </authorList>
    </citation>
    <scope>NUCLEOTIDE SEQUENCE [LARGE SCALE GENOMIC DNA]</scope>
    <source>
        <strain>WCH70</strain>
    </source>
</reference>
<keyword id="KW-0028">Amino-acid biosynthesis</keyword>
<keyword id="KW-0057">Aromatic amino acid biosynthesis</keyword>
<keyword id="KW-0456">Lyase</keyword>
<keyword id="KW-0704">Schiff base</keyword>
<sequence>MNISQKIVSVRGTQIGGEQPCICTPIVGASMEQILSETEEVCRKRPDIIEWRADFFKDIYDPQKVLETALAIRKIAGEIPILFTIRSEKEGGNPVPLTETEKIELFTEVCKSRLVDMIDCELLYEEELASLRQVSKEYGIRMIMSYHNFSSTPPKEELVQKMLQAESYGADIAKVAVMPASPQDLLVLFQATQEARSQLSIPLITMSMGGLGVITRLAGWMFGSAVTFAVGQNSSAPGQIPIEDLKEVLHIVQKHMFHG</sequence>
<gene>
    <name evidence="1" type="primary">aroD</name>
    <name type="ordered locus">GWCH70_2023</name>
</gene>
<comment type="function">
    <text evidence="1">Involved in the third step of the chorismate pathway, which leads to the biosynthesis of aromatic amino acids. Catalyzes the cis-dehydration of 3-dehydroquinate (DHQ) and introduces the first double bond of the aromatic ring to yield 3-dehydroshikimate.</text>
</comment>
<comment type="catalytic activity">
    <reaction evidence="1">
        <text>3-dehydroquinate = 3-dehydroshikimate + H2O</text>
        <dbReference type="Rhea" id="RHEA:21096"/>
        <dbReference type="ChEBI" id="CHEBI:15377"/>
        <dbReference type="ChEBI" id="CHEBI:16630"/>
        <dbReference type="ChEBI" id="CHEBI:32364"/>
        <dbReference type="EC" id="4.2.1.10"/>
    </reaction>
</comment>
<comment type="pathway">
    <text evidence="1">Metabolic intermediate biosynthesis; chorismate biosynthesis; chorismate from D-erythrose 4-phosphate and phosphoenolpyruvate: step 3/7.</text>
</comment>
<comment type="subunit">
    <text evidence="1">Homodimer.</text>
</comment>
<comment type="similarity">
    <text evidence="1">Belongs to the type-I 3-dehydroquinase family.</text>
</comment>